<organism>
    <name type="scientific">Mycoplasma pneumoniae (strain ATCC 29342 / M129 / Subtype 1)</name>
    <name type="common">Mycoplasmoides pneumoniae</name>
    <dbReference type="NCBI Taxonomy" id="272634"/>
    <lineage>
        <taxon>Bacteria</taxon>
        <taxon>Bacillati</taxon>
        <taxon>Mycoplasmatota</taxon>
        <taxon>Mycoplasmoidales</taxon>
        <taxon>Mycoplasmoidaceae</taxon>
        <taxon>Mycoplasmoides</taxon>
    </lineage>
</organism>
<proteinExistence type="predicted"/>
<accession>P75143</accession>
<evidence type="ECO:0000256" key="1">
    <source>
        <dbReference type="SAM" id="MobiDB-lite"/>
    </source>
</evidence>
<gene>
    <name type="ordered locus">MPN_143</name>
    <name type="ORF">E07_orf175</name>
    <name type="ORF">MP011</name>
</gene>
<keyword id="KW-1185">Reference proteome</keyword>
<reference key="1">
    <citation type="journal article" date="1996" name="Nucleic Acids Res.">
        <title>Complete sequence analysis of the genome of the bacterium Mycoplasma pneumoniae.</title>
        <authorList>
            <person name="Himmelreich R."/>
            <person name="Hilbert H."/>
            <person name="Plagens H."/>
            <person name="Pirkl E."/>
            <person name="Li B.-C."/>
            <person name="Herrmann R."/>
        </authorList>
    </citation>
    <scope>NUCLEOTIDE SEQUENCE [LARGE SCALE GENOMIC DNA]</scope>
    <source>
        <strain>ATCC 29342 / M129 / Subtype 1</strain>
    </source>
</reference>
<dbReference type="EMBL" id="U00089">
    <property type="protein sequence ID" value="AAB95659.1"/>
    <property type="molecule type" value="Genomic_DNA"/>
</dbReference>
<dbReference type="PIR" id="S73337">
    <property type="entry name" value="S73337"/>
</dbReference>
<dbReference type="RefSeq" id="NP_109831.1">
    <property type="nucleotide sequence ID" value="NC_000912.1"/>
</dbReference>
<dbReference type="RefSeq" id="WP_010874500.1">
    <property type="nucleotide sequence ID" value="NZ_OU342337.1"/>
</dbReference>
<dbReference type="SMR" id="P75143"/>
<dbReference type="STRING" id="272634.MPN_143"/>
<dbReference type="EnsemblBacteria" id="AAB95659">
    <property type="protein sequence ID" value="AAB95659"/>
    <property type="gene ID" value="MPN_143"/>
</dbReference>
<dbReference type="KEGG" id="mpn:MPN_143"/>
<dbReference type="PATRIC" id="fig|272634.6.peg.157"/>
<dbReference type="HOGENOM" id="CLU_1530884_0_0_14"/>
<dbReference type="BioCyc" id="MPNE272634:G1GJ3-242-MONOMER"/>
<dbReference type="Proteomes" id="UP000000808">
    <property type="component" value="Chromosome"/>
</dbReference>
<sequence length="175" mass="20516">MSHKDFNGLQAPQLLSSSSPVAKKQSSHKLRHALKHARYLNHSSKRTLKHALELHEDNQVLLEKEGSPNFQDWLSKQPGVNKTSLKYNKSLGSWISKESKPKKRFPPYFTYKGSKTTPEEAKALQQMKQSQKRFFHENMHSFLNEVAHNPMIQRFKQKQAKRAANTRQRTYKYRQ</sequence>
<feature type="chain" id="PRO_0000210653" description="Uncharacterized protein MPN_143">
    <location>
        <begin position="1"/>
        <end position="175"/>
    </location>
</feature>
<feature type="region of interest" description="Disordered" evidence="1">
    <location>
        <begin position="1"/>
        <end position="32"/>
    </location>
</feature>
<feature type="region of interest" description="Disordered" evidence="1">
    <location>
        <begin position="156"/>
        <end position="175"/>
    </location>
</feature>
<feature type="compositionally biased region" description="Low complexity" evidence="1">
    <location>
        <begin position="14"/>
        <end position="24"/>
    </location>
</feature>
<protein>
    <recommendedName>
        <fullName>Uncharacterized protein MPN_143</fullName>
    </recommendedName>
</protein>
<name>Y143_MYCPN</name>